<feature type="signal peptide" evidence="1">
    <location>
        <begin position="1"/>
        <end position="35"/>
    </location>
</feature>
<feature type="chain" id="PRO_5000090517" description="Putative uncharacterized protein IRX2-DT">
    <location>
        <begin position="36"/>
        <end position="138"/>
    </location>
</feature>
<feature type="splice variant" id="VSP_026649" description="In isoform 3." evidence="3">
    <original>RFVLSKHWGDDCYLTNRLWQDLKPPSHVENGQELRLAPPVQWALQVQGNQLQTAVLCLRMAPPEPAGSR</original>
    <variation>S</variation>
    <location>
        <begin position="67"/>
        <end position="135"/>
    </location>
</feature>
<feature type="splice variant" id="VSP_026648" description="In isoform 2." evidence="3">
    <original>VQGNQLQTAVLCLRMAPPEPAGSRQRI</original>
    <variation>PKNLERVYVDTQVSASGDFLRGRARGTAGPGGSGSGSPRGRGRLRRPGRSPGAAPSSVSRGRKEATQARSRARGRRGGAVARVCRPESRQRWARPTSSPGGLIRGRRKNGIEAFQ</variation>
    <location>
        <begin position="112"/>
        <end position="138"/>
    </location>
</feature>
<gene>
    <name evidence="5" type="primary">IRX2-DT</name>
    <name type="synonym">C5orf38</name>
    <name evidence="3" type="synonym">CEI</name>
</gene>
<keyword id="KW-0025">Alternative splicing</keyword>
<keyword id="KW-1185">Reference proteome</keyword>
<keyword id="KW-0964">Secreted</keyword>
<keyword id="KW-0732">Signal</keyword>
<evidence type="ECO:0000255" key="1"/>
<evidence type="ECO:0000269" key="2">
    <source>
    </source>
</evidence>
<evidence type="ECO:0000303" key="3">
    <source>
    </source>
</evidence>
<evidence type="ECO:0000305" key="4"/>
<evidence type="ECO:0000312" key="5">
    <source>
        <dbReference type="HGNC" id="HGNC:24226"/>
    </source>
</evidence>
<accession>Q86SI9</accession>
<name>CEI_HUMAN</name>
<sequence length="138" mass="15091">MVAPAARVFLRAVRAALTSTVPDLLCLLARGSPRGLASGRLPLAVHSAQHGPGSGAPWLRIARRALRFVLSKHWGDDCYLTNRLWQDLKPPSHVENGQELRLAPPVQWALQVQGNQLQTAVLCLRMAPPEPAGSRQRI</sequence>
<reference key="1">
    <citation type="journal article" date="2006" name="Gene">
        <title>A novel primate specific gene, CEI, is located in the homeobox gene IRXA2 promoter in Homo sapiens.</title>
        <authorList>
            <person name="Wu Q."/>
            <person name="Tommerup N."/>
            <person name="Ming Wang S."/>
            <person name="Hansen L."/>
        </authorList>
    </citation>
    <scope>NUCLEOTIDE SEQUENCE [GENOMIC DNA / MRNA] (ISOFORMS 1; 2 AND 3)</scope>
    <scope>ALTERNATIVE SPLICING</scope>
    <scope>TISSUE SPECIFICITY</scope>
    <source>
        <tissue>Kidney</tissue>
    </source>
</reference>
<reference key="2">
    <citation type="journal article" date="2004" name="Genome Res.">
        <title>The status, quality, and expansion of the NIH full-length cDNA project: the Mammalian Gene Collection (MGC).</title>
        <authorList>
            <consortium name="The MGC Project Team"/>
        </authorList>
    </citation>
    <scope>NUCLEOTIDE SEQUENCE [LARGE SCALE MRNA] (ISOFORM 1)</scope>
    <source>
        <tissue>Brain</tissue>
    </source>
</reference>
<dbReference type="EMBL" id="AY249324">
    <property type="protein sequence ID" value="AAP15241.1"/>
    <property type="molecule type" value="Genomic_DNA"/>
</dbReference>
<dbReference type="EMBL" id="AY249325">
    <property type="protein sequence ID" value="AAP15242.1"/>
    <property type="molecule type" value="mRNA"/>
</dbReference>
<dbReference type="EMBL" id="BC101608">
    <property type="protein sequence ID" value="AAI01609.1"/>
    <property type="molecule type" value="mRNA"/>
</dbReference>
<dbReference type="EMBL" id="BC101634">
    <property type="protein sequence ID" value="AAI01635.1"/>
    <property type="molecule type" value="mRNA"/>
</dbReference>
<dbReference type="RefSeq" id="NP_001281266.1">
    <property type="nucleotide sequence ID" value="NM_001294337.1"/>
</dbReference>
<dbReference type="RefSeq" id="NP_001293078.1">
    <property type="nucleotide sequence ID" value="NM_001306149.1"/>
</dbReference>
<dbReference type="RefSeq" id="NP_848664.1">
    <property type="nucleotide sequence ID" value="NM_178569.3"/>
</dbReference>
<dbReference type="RefSeq" id="XP_005248313.1">
    <property type="nucleotide sequence ID" value="XM_005248256.3"/>
</dbReference>
<dbReference type="BioGRID" id="127503">
    <property type="interactions" value="1"/>
</dbReference>
<dbReference type="IntAct" id="Q86SI9">
    <property type="interactions" value="1"/>
</dbReference>
<dbReference type="STRING" id="9606.ENSP00000334267"/>
<dbReference type="iPTMnet" id="Q86SI9"/>
<dbReference type="BioMuta" id="C5orf38"/>
<dbReference type="MassIVE" id="Q86SI9"/>
<dbReference type="PaxDb" id="9606-ENSP00000334267"/>
<dbReference type="ProteomicsDB" id="69594">
    <molecule id="Q86SI9-2"/>
</dbReference>
<dbReference type="DNASU" id="153571"/>
<dbReference type="UCSC" id="uc003jdc.3">
    <molecule id="Q86SI9-1"/>
    <property type="organism name" value="human"/>
</dbReference>
<dbReference type="AGR" id="HGNC:24226"/>
<dbReference type="DisGeNET" id="153571"/>
<dbReference type="GeneCards" id="IRX2-DT"/>
<dbReference type="HGNC" id="HGNC:24226">
    <property type="gene designation" value="IRX2-DT"/>
</dbReference>
<dbReference type="MIM" id="610522">
    <property type="type" value="gene"/>
</dbReference>
<dbReference type="neXtProt" id="NX_Q86SI9"/>
<dbReference type="PharmGKB" id="PA162380158"/>
<dbReference type="VEuPathDB" id="HostDB:ENSG00000186493"/>
<dbReference type="eggNOG" id="ENOG502TDUE">
    <property type="taxonomic scope" value="Eukaryota"/>
</dbReference>
<dbReference type="HOGENOM" id="CLU_2793298_0_0_1"/>
<dbReference type="InParanoid" id="Q86SI9"/>
<dbReference type="OMA" id="DCYLINR"/>
<dbReference type="PAN-GO" id="Q86SI9">
    <property type="GO annotations" value="0 GO annotations based on evolutionary models"/>
</dbReference>
<dbReference type="PhylomeDB" id="Q86SI9"/>
<dbReference type="TreeFam" id="TF338586"/>
<dbReference type="PathwayCommons" id="Q86SI9"/>
<dbReference type="SignaLink" id="Q86SI9"/>
<dbReference type="BioGRID-ORCS" id="153571">
    <property type="hits" value="11 hits in 1130 CRISPR screens"/>
</dbReference>
<dbReference type="ChiTaRS" id="C5orf38">
    <property type="organism name" value="human"/>
</dbReference>
<dbReference type="GenomeRNAi" id="153571"/>
<dbReference type="Pharos" id="Q86SI9">
    <property type="development level" value="Tdark"/>
</dbReference>
<dbReference type="Proteomes" id="UP000005640">
    <property type="component" value="Chromosome 5"/>
</dbReference>
<dbReference type="RNAct" id="Q86SI9">
    <property type="molecule type" value="protein"/>
</dbReference>
<dbReference type="GO" id="GO:0005576">
    <property type="term" value="C:extracellular region"/>
    <property type="evidence" value="ECO:0007669"/>
    <property type="project" value="UniProtKB-SubCell"/>
</dbReference>
<protein>
    <recommendedName>
        <fullName>Putative uncharacterized protein IRX2-DT</fullName>
    </recommendedName>
    <alternativeName>
        <fullName>Coordinated expression to IRXA2 protein</fullName>
    </alternativeName>
    <alternativeName>
        <fullName evidence="5">IRX2 divergent transcript</fullName>
    </alternativeName>
    <alternativeName>
        <fullName>Protein CEI</fullName>
    </alternativeName>
</protein>
<organism>
    <name type="scientific">Homo sapiens</name>
    <name type="common">Human</name>
    <dbReference type="NCBI Taxonomy" id="9606"/>
    <lineage>
        <taxon>Eukaryota</taxon>
        <taxon>Metazoa</taxon>
        <taxon>Chordata</taxon>
        <taxon>Craniata</taxon>
        <taxon>Vertebrata</taxon>
        <taxon>Euteleostomi</taxon>
        <taxon>Mammalia</taxon>
        <taxon>Eutheria</taxon>
        <taxon>Euarchontoglires</taxon>
        <taxon>Primates</taxon>
        <taxon>Haplorrhini</taxon>
        <taxon>Catarrhini</taxon>
        <taxon>Hominidae</taxon>
        <taxon>Homo</taxon>
    </lineage>
</organism>
<comment type="interaction">
    <interactant intactId="EBI-17872065">
        <id>Q86SI9</id>
    </interactant>
    <interactant intactId="EBI-7062247">
        <id>Q9UHD4</id>
        <label>CIDEB</label>
    </interactant>
    <organismsDiffer>false</organismsDiffer>
    <experiments>3</experiments>
</comment>
<comment type="subcellular location">
    <subcellularLocation>
        <location evidence="4">Secreted</location>
    </subcellularLocation>
</comment>
<comment type="alternative products">
    <event type="alternative splicing"/>
    <isoform>
        <id>Q86SI9-1</id>
        <name>1</name>
        <name>CEIa</name>
        <sequence type="displayed"/>
    </isoform>
    <isoform>
        <id>Q86SI9-2</id>
        <name>2</name>
        <name>CEIb</name>
        <sequence type="described" ref="VSP_026648"/>
    </isoform>
    <isoform>
        <id>Q86SI9-3</id>
        <name>3</name>
        <name>CEIc</name>
        <sequence type="described" ref="VSP_026649"/>
    </isoform>
</comment>
<comment type="tissue specificity">
    <text evidence="2">Isoform 1 is highly expressed in small intestine, testis and kidney, medium expressed in brain and heart and low expressed in colon; it could not be detected in liver, adrenal gland and pancreas.</text>
</comment>
<comment type="miscellaneous">
    <text>According to PubMed:16515847, this gene is only represented in primates genome and it is highly conserved. Also found in bats (according to Ensembl).</text>
</comment>
<comment type="caution">
    <text evidence="4">Product of a dubious CDS prediction. May be a long non-coding RNA.</text>
</comment>
<proteinExistence type="uncertain"/>